<evidence type="ECO:0000255" key="1">
    <source>
        <dbReference type="HAMAP-Rule" id="MF_00294"/>
    </source>
</evidence>
<feature type="chain" id="PRO_0000356680" description="Large ribosomal subunit protein bL33B">
    <location>
        <begin position="1"/>
        <end position="52"/>
    </location>
</feature>
<sequence length="52" mass="6292">MFNVRVNVTLACTECGDRNYITTKNKRNNPERIEMKKYCPRLNKYTLHRETK</sequence>
<keyword id="KW-0687">Ribonucleoprotein</keyword>
<keyword id="KW-0689">Ribosomal protein</keyword>
<gene>
    <name evidence="1" type="primary">rpmG2</name>
    <name type="ordered locus">SAB1193</name>
</gene>
<reference key="1">
    <citation type="journal article" date="2007" name="PLoS ONE">
        <title>Molecular correlates of host specialization in Staphylococcus aureus.</title>
        <authorList>
            <person name="Herron-Olson L."/>
            <person name="Fitzgerald J.R."/>
            <person name="Musser J.M."/>
            <person name="Kapur V."/>
        </authorList>
    </citation>
    <scope>NUCLEOTIDE SEQUENCE [LARGE SCALE GENOMIC DNA]</scope>
    <source>
        <strain>bovine RF122 / ET3-1</strain>
    </source>
</reference>
<name>RL332_STAAB</name>
<comment type="similarity">
    <text evidence="1">Belongs to the bacterial ribosomal protein bL33 family.</text>
</comment>
<accession>Q2YXT1</accession>
<dbReference type="EMBL" id="AJ938182">
    <property type="protein sequence ID" value="CAI80882.1"/>
    <property type="molecule type" value="Genomic_DNA"/>
</dbReference>
<dbReference type="SMR" id="Q2YXT1"/>
<dbReference type="KEGG" id="sab:SAB1193"/>
<dbReference type="HOGENOM" id="CLU_190949_0_2_9"/>
<dbReference type="GO" id="GO:0005737">
    <property type="term" value="C:cytoplasm"/>
    <property type="evidence" value="ECO:0007669"/>
    <property type="project" value="UniProtKB-ARBA"/>
</dbReference>
<dbReference type="GO" id="GO:1990904">
    <property type="term" value="C:ribonucleoprotein complex"/>
    <property type="evidence" value="ECO:0007669"/>
    <property type="project" value="UniProtKB-KW"/>
</dbReference>
<dbReference type="GO" id="GO:0005840">
    <property type="term" value="C:ribosome"/>
    <property type="evidence" value="ECO:0007669"/>
    <property type="project" value="UniProtKB-KW"/>
</dbReference>
<dbReference type="GO" id="GO:0003735">
    <property type="term" value="F:structural constituent of ribosome"/>
    <property type="evidence" value="ECO:0007669"/>
    <property type="project" value="InterPro"/>
</dbReference>
<dbReference type="GO" id="GO:0006412">
    <property type="term" value="P:translation"/>
    <property type="evidence" value="ECO:0007669"/>
    <property type="project" value="UniProtKB-UniRule"/>
</dbReference>
<dbReference type="Gene3D" id="2.20.28.120">
    <property type="entry name" value="Ribosomal protein L33"/>
    <property type="match status" value="1"/>
</dbReference>
<dbReference type="HAMAP" id="MF_00294">
    <property type="entry name" value="Ribosomal_bL33"/>
    <property type="match status" value="1"/>
</dbReference>
<dbReference type="InterPro" id="IPR001705">
    <property type="entry name" value="Ribosomal_bL33"/>
</dbReference>
<dbReference type="InterPro" id="IPR018264">
    <property type="entry name" value="Ribosomal_bL33_CS"/>
</dbReference>
<dbReference type="InterPro" id="IPR038584">
    <property type="entry name" value="Ribosomal_bL33_sf"/>
</dbReference>
<dbReference type="InterPro" id="IPR011332">
    <property type="entry name" value="Ribosomal_zn-bd"/>
</dbReference>
<dbReference type="NCBIfam" id="NF001764">
    <property type="entry name" value="PRK00504.1"/>
    <property type="match status" value="1"/>
</dbReference>
<dbReference type="NCBIfam" id="NF001860">
    <property type="entry name" value="PRK00595.1"/>
    <property type="match status" value="1"/>
</dbReference>
<dbReference type="NCBIfam" id="TIGR01023">
    <property type="entry name" value="rpmG_bact"/>
    <property type="match status" value="1"/>
</dbReference>
<dbReference type="PANTHER" id="PTHR43168">
    <property type="entry name" value="50S RIBOSOMAL PROTEIN L33, CHLOROPLASTIC"/>
    <property type="match status" value="1"/>
</dbReference>
<dbReference type="PANTHER" id="PTHR43168:SF2">
    <property type="entry name" value="LARGE RIBOSOMAL SUBUNIT PROTEIN BL33C"/>
    <property type="match status" value="1"/>
</dbReference>
<dbReference type="Pfam" id="PF00471">
    <property type="entry name" value="Ribosomal_L33"/>
    <property type="match status" value="1"/>
</dbReference>
<dbReference type="SUPFAM" id="SSF57829">
    <property type="entry name" value="Zn-binding ribosomal proteins"/>
    <property type="match status" value="1"/>
</dbReference>
<dbReference type="PROSITE" id="PS00582">
    <property type="entry name" value="RIBOSOMAL_L33"/>
    <property type="match status" value="1"/>
</dbReference>
<organism>
    <name type="scientific">Staphylococcus aureus (strain bovine RF122 / ET3-1)</name>
    <dbReference type="NCBI Taxonomy" id="273036"/>
    <lineage>
        <taxon>Bacteria</taxon>
        <taxon>Bacillati</taxon>
        <taxon>Bacillota</taxon>
        <taxon>Bacilli</taxon>
        <taxon>Bacillales</taxon>
        <taxon>Staphylococcaceae</taxon>
        <taxon>Staphylococcus</taxon>
    </lineage>
</organism>
<proteinExistence type="inferred from homology"/>
<protein>
    <recommendedName>
        <fullName evidence="1">Large ribosomal subunit protein bL33B</fullName>
    </recommendedName>
    <alternativeName>
        <fullName evidence="1">50S ribosomal protein L33 2</fullName>
    </alternativeName>
</protein>